<name>PDK2_RAT</name>
<organism>
    <name type="scientific">Rattus norvegicus</name>
    <name type="common">Rat</name>
    <dbReference type="NCBI Taxonomy" id="10116"/>
    <lineage>
        <taxon>Eukaryota</taxon>
        <taxon>Metazoa</taxon>
        <taxon>Chordata</taxon>
        <taxon>Craniata</taxon>
        <taxon>Vertebrata</taxon>
        <taxon>Euteleostomi</taxon>
        <taxon>Mammalia</taxon>
        <taxon>Eutheria</taxon>
        <taxon>Euarchontoglires</taxon>
        <taxon>Glires</taxon>
        <taxon>Rodentia</taxon>
        <taxon>Myomorpha</taxon>
        <taxon>Muroidea</taxon>
        <taxon>Muridae</taxon>
        <taxon>Murinae</taxon>
        <taxon>Rattus</taxon>
    </lineage>
</organism>
<sequence length="407" mass="46106">MRWFRALLKNASLAGAPKYIEHFSKFSPSPLSMKQFLDFGSSNACEKTSFTFLRQELPVRLANIMKEINLLPDRVLSTPSVQLVQSWYVQSLLDIMEFLDKDPEDHRTLSQFTDALVTIRNRHNDVVPTMAQGVLEYKDTYGDDPVSNQNIQYFLDRFYLSRISIRMLINQHTLIFDGSTNPAHPKHIGSIDPNCSVSDVVKDAYDMAKLLCDKYYMASPDLEIQEVNATNATQPIHMVYVPSHLYHMLFELFKNAMRATVESHESSLTLPPIKIMVALGEEDLSIKMSDRGGGVPLRKIERLFSYMYSTAPTPQPGTGGTPLAGFGYGLPISRLYAKYFQGDLQLFSMEGFGTDAVIYLKALSTDSVERLPVYNKSAWRHYQTIQEAGDWCVPSTEPKNTSTYRVS</sequence>
<gene>
    <name type="primary">Pdk2</name>
</gene>
<keyword id="KW-0002">3D-structure</keyword>
<keyword id="KW-0067">ATP-binding</keyword>
<keyword id="KW-0418">Kinase</keyword>
<keyword id="KW-0496">Mitochondrion</keyword>
<keyword id="KW-0547">Nucleotide-binding</keyword>
<keyword id="KW-0597">Phosphoprotein</keyword>
<keyword id="KW-1185">Reference proteome</keyword>
<keyword id="KW-0808">Transferase</keyword>
<keyword id="KW-0809">Transit peptide</keyword>
<reference key="1">
    <citation type="journal article" date="1994" name="J. Biol. Chem.">
        <title>Molecular cloning of the p45 subunit of pyruvate dehydrogenase kinase.</title>
        <authorList>
            <person name="Popov K.M."/>
            <person name="Kedishvili N.Y."/>
            <person name="Zhao Y."/>
            <person name="Gudi R."/>
            <person name="Harris R.A."/>
        </authorList>
    </citation>
    <scope>NUCLEOTIDE SEQUENCE [MRNA]</scope>
    <scope>CATALYTIC ACTIVITY</scope>
    <scope>FUNCTION</scope>
    <scope>TISSUE SPECIFICITY</scope>
    <source>
        <tissue>Heart</tissue>
    </source>
</reference>
<reference key="2">
    <citation type="journal article" date="2004" name="Genome Res.">
        <title>The status, quality, and expansion of the NIH full-length cDNA project: the Mammalian Gene Collection (MGC).</title>
        <authorList>
            <consortium name="The MGC Project Team"/>
        </authorList>
    </citation>
    <scope>NUCLEOTIDE SEQUENCE [LARGE SCALE MRNA]</scope>
    <source>
        <tissue>Prostate</tissue>
    </source>
</reference>
<reference key="3">
    <citation type="journal article" date="1998" name="Biochem. J.">
        <title>Evidence for existence of tissue-specific regulation of the mammalian pyruvate dehydrogenase complex.</title>
        <authorList>
            <person name="Bowker-Kinley M.M."/>
            <person name="Davis W.I."/>
            <person name="Wu P."/>
            <person name="Harris R.A."/>
            <person name="Popov K.M."/>
        </authorList>
    </citation>
    <scope>CATALYTIC ACTIVITY</scope>
    <scope>ACTIVITY REGULATION</scope>
    <scope>TISSUE SPECIFICITY</scope>
</reference>
<reference key="4">
    <citation type="journal article" date="2001" name="J. Biol. Chem.">
        <title>Site specificity of four pyruvate dehydrogenase kinase isoenzymes toward the three phosphorylation sites of human pyruvate dehydrogenase.</title>
        <authorList>
            <person name="Korotchkina L.G."/>
            <person name="Patel M.S."/>
        </authorList>
    </citation>
    <scope>CATALYTIC ACTIVITY</scope>
    <scope>FUNCTION</scope>
</reference>
<reference key="5">
    <citation type="journal article" date="2002" name="Biochem. J.">
        <title>Interaction between the individual isoenzymes of pyruvate dehydrogenase kinase and the inner lipoyl-bearing domain of transacetylase component of pyruvate dehydrogenase complex.</title>
        <authorList>
            <person name="Tuganova A."/>
            <person name="Boulatnikov I."/>
            <person name="Popov K.M."/>
        </authorList>
    </citation>
    <scope>INTERACTION WITH DLAT</scope>
</reference>
<reference key="6">
    <citation type="journal article" date="2003" name="Biochem. Soc. Trans.">
        <title>AZD7545, a novel inhibitor of pyruvate dehydrogenase kinase 2 (PDHK2), activates pyruvate dehydrogenase in vivo and improves blood glucose control in obese (fa/fa) Zucker rats.</title>
        <authorList>
            <person name="Mayers R.M."/>
            <person name="Butlin R.J."/>
            <person name="Kilgour E."/>
            <person name="Leighton B."/>
            <person name="Martin D."/>
            <person name="Myatt J."/>
            <person name="Orme J.P."/>
            <person name="Holloway B.R."/>
        </authorList>
    </citation>
    <scope>FUNCTION</scope>
</reference>
<reference key="7">
    <citation type="journal article" date="2003" name="Biochim. Biophys. Acta">
        <title>Formation of functional heterodimers by isozymes 1 and 2 of pyruvate dehydrogenase kinase.</title>
        <authorList>
            <person name="Boulatnikov I."/>
            <person name="Popov K.M."/>
        </authorList>
    </citation>
    <scope>CATALYTIC ACTIVITY</scope>
    <scope>FUNCTION</scope>
    <scope>INTERACTION WITH PDK1</scope>
    <scope>SUBUNIT</scope>
</reference>
<reference key="8">
    <citation type="journal article" date="2012" name="J. Biol. Chem.">
        <title>Inactivation of pyruvate dehydrogenase kinase 2 by mitochondrial reactive oxygen species.</title>
        <authorList>
            <person name="Hurd T.R."/>
            <person name="Collins Y."/>
            <person name="Abakumova I."/>
            <person name="Chouchani E.T."/>
            <person name="Baranowski B."/>
            <person name="Fearnley I.M."/>
            <person name="Prime T.A."/>
            <person name="Murphy M.P."/>
            <person name="James A.M."/>
        </authorList>
    </citation>
    <scope>FUNCTION</scope>
    <scope>CATALYTIC ACTIVITY</scope>
    <scope>SUBCELLULAR LOCATION</scope>
    <scope>ACTIVITY REGULATION</scope>
    <scope>TISSUE SPECIFICITY</scope>
</reference>
<reference key="9">
    <citation type="journal article" date="2001" name="J. Biol. Chem.">
        <title>Structure of pyruvate dehydrogenase kinase. Novel folding pattern for a serine protein kinase.</title>
        <authorList>
            <person name="Steussy C.N."/>
            <person name="Popov K.M."/>
            <person name="Bowker-Kinley M.M."/>
            <person name="Sloan R.B. Jr."/>
            <person name="Harris R.A."/>
            <person name="Hamilton J.A."/>
        </authorList>
    </citation>
    <scope>X-RAY CRYSTALLOGRAPHY (2.5 ANGSTROMS) IN COMPLEX WITH ADP</scope>
</reference>
<reference key="10">
    <citation type="journal article" date="2008" name="J. Biol. Chem.">
        <title>Structural and functional insights into the molecular mechanisms responsible for the regulation of pyruvate dehydrogenase kinase 2.</title>
        <authorList>
            <person name="Green T."/>
            <person name="Grigorian A."/>
            <person name="Klyuyeva A."/>
            <person name="Tuganova A."/>
            <person name="Luo M."/>
            <person name="Popov K.M."/>
        </authorList>
    </citation>
    <scope>X-RAY CRYSTALLOGRAPHY (2.3 ANGSTROMS) IN COMPLEX WITH ATP ANALOG AND DLAT</scope>
    <scope>CATALYTIC ACTIVITY</scope>
    <scope>SUBUNIT</scope>
</reference>
<accession>Q64536</accession>
<evidence type="ECO:0000250" key="1">
    <source>
        <dbReference type="UniProtKB" id="Q15118"/>
    </source>
</evidence>
<evidence type="ECO:0000250" key="2">
    <source>
        <dbReference type="UniProtKB" id="Q8BFP9"/>
    </source>
</evidence>
<evidence type="ECO:0000255" key="3"/>
<evidence type="ECO:0000255" key="4">
    <source>
        <dbReference type="PROSITE-ProRule" id="PRU00107"/>
    </source>
</evidence>
<evidence type="ECO:0000269" key="5">
    <source>
    </source>
</evidence>
<evidence type="ECO:0000269" key="6">
    <source>
    </source>
</evidence>
<evidence type="ECO:0000269" key="7">
    <source>
    </source>
</evidence>
<evidence type="ECO:0000269" key="8">
    <source>
    </source>
</evidence>
<evidence type="ECO:0000269" key="9">
    <source>
    </source>
</evidence>
<evidence type="ECO:0000269" key="10">
    <source>
    </source>
</evidence>
<evidence type="ECO:0000269" key="11">
    <source>
    </source>
</evidence>
<evidence type="ECO:0000269" key="12">
    <source>
    </source>
</evidence>
<evidence type="ECO:0000269" key="13">
    <source>
    </source>
</evidence>
<evidence type="ECO:0000305" key="14"/>
<evidence type="ECO:0007829" key="15">
    <source>
        <dbReference type="PDB" id="3CRK"/>
    </source>
</evidence>
<evidence type="ECO:0007829" key="16">
    <source>
        <dbReference type="PDB" id="3CRL"/>
    </source>
</evidence>
<proteinExistence type="evidence at protein level"/>
<feature type="transit peptide" description="Mitochondrion" evidence="3">
    <location>
        <begin position="1"/>
        <end status="unknown"/>
    </location>
</feature>
<feature type="chain" id="PRO_0000023442" description="[Pyruvate dehydrogenase (acetyl-transferring)] kinase isozyme 2, mitochondrial">
    <location>
        <begin status="unknown"/>
        <end position="407"/>
    </location>
</feature>
<feature type="domain" description="Histidine kinase" evidence="4">
    <location>
        <begin position="135"/>
        <end position="364"/>
    </location>
</feature>
<feature type="binding site">
    <location>
        <begin position="251"/>
        <end position="258"/>
    </location>
    <ligand>
        <name>ATP</name>
        <dbReference type="ChEBI" id="CHEBI:30616"/>
    </ligand>
</feature>
<feature type="binding site">
    <location>
        <position position="290"/>
    </location>
    <ligand>
        <name>ATP</name>
        <dbReference type="ChEBI" id="CHEBI:30616"/>
    </ligand>
</feature>
<feature type="binding site">
    <location>
        <begin position="309"/>
        <end position="310"/>
    </location>
    <ligand>
        <name>ATP</name>
        <dbReference type="ChEBI" id="CHEBI:30616"/>
    </ligand>
</feature>
<feature type="binding site">
    <location>
        <begin position="325"/>
        <end position="330"/>
    </location>
    <ligand>
        <name>ATP</name>
        <dbReference type="ChEBI" id="CHEBI:30616"/>
    </ligand>
</feature>
<feature type="modified residue" description="Phosphotyrosine" evidence="1">
    <location>
        <position position="215"/>
    </location>
</feature>
<feature type="modified residue" description="Phosphotyrosine" evidence="1">
    <location>
        <position position="216"/>
    </location>
</feature>
<feature type="modified residue" description="N6-succinyllysine" evidence="2">
    <location>
        <position position="376"/>
    </location>
</feature>
<feature type="helix" evidence="16">
    <location>
        <begin position="13"/>
        <end position="15"/>
    </location>
</feature>
<feature type="helix" evidence="15">
    <location>
        <begin position="16"/>
        <end position="24"/>
    </location>
</feature>
<feature type="helix" evidence="15">
    <location>
        <begin position="33"/>
        <end position="39"/>
    </location>
</feature>
<feature type="strand" evidence="16">
    <location>
        <begin position="41"/>
        <end position="43"/>
    </location>
</feature>
<feature type="helix" evidence="15">
    <location>
        <begin position="46"/>
        <end position="68"/>
    </location>
</feature>
<feature type="helix" evidence="15">
    <location>
        <begin position="73"/>
        <end position="76"/>
    </location>
</feature>
<feature type="helix" evidence="15">
    <location>
        <begin position="79"/>
        <end position="96"/>
    </location>
</feature>
<feature type="turn" evidence="15">
    <location>
        <begin position="97"/>
        <end position="100"/>
    </location>
</feature>
<feature type="helix" evidence="15">
    <location>
        <begin position="106"/>
        <end position="122"/>
    </location>
</feature>
<feature type="turn" evidence="15">
    <location>
        <begin position="123"/>
        <end position="125"/>
    </location>
</feature>
<feature type="helix" evidence="15">
    <location>
        <begin position="126"/>
        <end position="141"/>
    </location>
</feature>
<feature type="helix" evidence="15">
    <location>
        <begin position="145"/>
        <end position="176"/>
    </location>
</feature>
<feature type="strand" evidence="16">
    <location>
        <begin position="185"/>
        <end position="188"/>
    </location>
</feature>
<feature type="strand" evidence="15">
    <location>
        <begin position="191"/>
        <end position="196"/>
    </location>
</feature>
<feature type="helix" evidence="15">
    <location>
        <begin position="197"/>
        <end position="215"/>
    </location>
</feature>
<feature type="strand" evidence="15">
    <location>
        <begin position="222"/>
        <end position="231"/>
    </location>
</feature>
<feature type="strand" evidence="15">
    <location>
        <begin position="237"/>
        <end position="240"/>
    </location>
</feature>
<feature type="helix" evidence="15">
    <location>
        <begin position="242"/>
        <end position="262"/>
    </location>
</feature>
<feature type="strand" evidence="15">
    <location>
        <begin position="267"/>
        <end position="269"/>
    </location>
</feature>
<feature type="strand" evidence="15">
    <location>
        <begin position="273"/>
        <end position="279"/>
    </location>
</feature>
<feature type="strand" evidence="15">
    <location>
        <begin position="281"/>
        <end position="290"/>
    </location>
</feature>
<feature type="helix" evidence="15">
    <location>
        <begin position="297"/>
        <end position="300"/>
    </location>
</feature>
<feature type="helix" evidence="15">
    <location>
        <begin position="301"/>
        <end position="304"/>
    </location>
</feature>
<feature type="turn" evidence="15">
    <location>
        <begin position="306"/>
        <end position="309"/>
    </location>
</feature>
<feature type="helix" evidence="15">
    <location>
        <begin position="329"/>
        <end position="339"/>
    </location>
</feature>
<feature type="strand" evidence="15">
    <location>
        <begin position="343"/>
        <end position="349"/>
    </location>
</feature>
<feature type="turn" evidence="15">
    <location>
        <begin position="350"/>
        <end position="352"/>
    </location>
</feature>
<feature type="strand" evidence="15">
    <location>
        <begin position="353"/>
        <end position="363"/>
    </location>
</feature>
<feature type="turn" evidence="15">
    <location>
        <begin position="364"/>
        <end position="366"/>
    </location>
</feature>
<feature type="helix" evidence="15">
    <location>
        <begin position="376"/>
        <end position="380"/>
    </location>
</feature>
<comment type="function">
    <text evidence="6 8 9 11 12">Kinase that plays a key role in the regulation of glucose and fatty acid metabolism and homeostasis via phosphorylation of the pyruvate dehydrogenase subunits PDHA1 and PDHA2. This inhibits pyruvate dehydrogenase activity, and thereby regulates metabolite flux through the tricarboxylic acid cycle, down-regulates aerobic respiration and inhibits the formation of acetyl-coenzyme A from pyruvate. Inhibition of pyruvate dehydrogenase decreases glucose utilization and increases fat metabolism. Mediates cellular responses to insulin. Plays an important role in maintaining normal blood glucose levels and in metabolic adaptation to nutrient availability. Via its regulation of pyruvate dehydrogenase activity, plays an important role in maintaining normal blood pH and in preventing the accumulation of ketone bodies under starvation. Plays a role in the regulation of cell proliferation and in resistance to apoptosis under oxidative stress. Plays a role in p53/TP53-mediated apoptosis.</text>
</comment>
<comment type="catalytic activity">
    <reaction evidence="6 8 10 11 12 13">
        <text>L-seryl-[pyruvate dehydrogenase E1 alpha subunit] + ATP = O-phospho-L-seryl-[pyruvate dehydrogenase E1 alpha subunit] + ADP + H(+)</text>
        <dbReference type="Rhea" id="RHEA:23052"/>
        <dbReference type="Rhea" id="RHEA-COMP:13689"/>
        <dbReference type="Rhea" id="RHEA-COMP:13690"/>
        <dbReference type="ChEBI" id="CHEBI:15378"/>
        <dbReference type="ChEBI" id="CHEBI:29999"/>
        <dbReference type="ChEBI" id="CHEBI:30616"/>
        <dbReference type="ChEBI" id="CHEBI:83421"/>
        <dbReference type="ChEBI" id="CHEBI:456216"/>
        <dbReference type="EC" id="2.7.11.2"/>
    </reaction>
</comment>
<comment type="activity regulation">
    <text evidence="11 13">Activity increases in response to increased acetyl-CoA and NADH levels and upon binding to the pyruvate dehydrogenase subunit DLAT. Inhibited by ADP and pyruvate; these compounds interfere with DLAT binding and thereby inhibit kinase activity. Inhibited by dichloroacetate. Inhibited by AZD7545; this compound interferes with DLAT binding and thereby inhibits kinase activity. Reactive oxygen species cause the formation of disulfide bonds, and thereby inhibit the enzyme.</text>
</comment>
<comment type="subunit">
    <text evidence="5 7 8 10">Homodimer, and heterodimer with PDK1. Interacts with the pyruvate dehydrogenase complex subunit DLAT, and is part of the multimeric pyruvate dehydrogenase complex that contains multiple copies of pyruvate dehydrogenase (E1), dihydrolipoamide acetyltransferase (DLAT, E2) and lipoamide dehydrogenase (DLD, E3).</text>
</comment>
<comment type="subcellular location">
    <subcellularLocation>
        <location evidence="11">Mitochondrion matrix</location>
    </subcellularLocation>
</comment>
<comment type="tissue specificity">
    <text evidence="11 12 13">Detected in heart (at protein level). Highest level of expression in heart and skeletal muscle and the lowest in spleen and lung. Liver, kidney, brain and testis levels are intermediate.</text>
</comment>
<comment type="similarity">
    <text evidence="14">Belongs to the PDK/BCKDK protein kinase family.</text>
</comment>
<dbReference type="EC" id="2.7.11.2"/>
<dbReference type="EMBL" id="U10357">
    <property type="protein sequence ID" value="AAB54084.1"/>
    <property type="molecule type" value="mRNA"/>
</dbReference>
<dbReference type="EMBL" id="BC061823">
    <property type="protein sequence ID" value="AAH61823.1"/>
    <property type="molecule type" value="mRNA"/>
</dbReference>
<dbReference type="PIR" id="A55305">
    <property type="entry name" value="A55305"/>
</dbReference>
<dbReference type="RefSeq" id="NP_110499.1">
    <property type="nucleotide sequence ID" value="NM_030872.2"/>
</dbReference>
<dbReference type="PDB" id="1JM6">
    <property type="method" value="X-ray"/>
    <property type="resolution" value="2.50 A"/>
    <property type="chains" value="A/B=1-407"/>
</dbReference>
<dbReference type="PDB" id="3CRK">
    <property type="method" value="X-ray"/>
    <property type="resolution" value="2.30 A"/>
    <property type="chains" value="A/B=1-407"/>
</dbReference>
<dbReference type="PDB" id="3CRL">
    <property type="method" value="X-ray"/>
    <property type="resolution" value="2.61 A"/>
    <property type="chains" value="A/B=1-407"/>
</dbReference>
<dbReference type="PDBsum" id="1JM6"/>
<dbReference type="PDBsum" id="3CRK"/>
<dbReference type="PDBsum" id="3CRL"/>
<dbReference type="SMR" id="Q64536"/>
<dbReference type="BioGRID" id="249527">
    <property type="interactions" value="1"/>
</dbReference>
<dbReference type="FunCoup" id="Q64536">
    <property type="interactions" value="1998"/>
</dbReference>
<dbReference type="IntAct" id="Q64536">
    <property type="interactions" value="1"/>
</dbReference>
<dbReference type="STRING" id="10116.ENSRNOP00000005641"/>
<dbReference type="BindingDB" id="Q64536"/>
<dbReference type="ChEMBL" id="CHEMBL2096663"/>
<dbReference type="GlyGen" id="Q64536">
    <property type="glycosylation" value="1 site, 1 O-linked glycan (1 site)"/>
</dbReference>
<dbReference type="iPTMnet" id="Q64536"/>
<dbReference type="PhosphoSitePlus" id="Q64536"/>
<dbReference type="jPOST" id="Q64536"/>
<dbReference type="PaxDb" id="10116-ENSRNOP00000005641"/>
<dbReference type="GeneID" id="81530"/>
<dbReference type="KEGG" id="rno:81530"/>
<dbReference type="UCSC" id="RGD:69428">
    <property type="organism name" value="rat"/>
</dbReference>
<dbReference type="AGR" id="RGD:69428"/>
<dbReference type="CTD" id="5164"/>
<dbReference type="RGD" id="69428">
    <property type="gene designation" value="Pdk2"/>
</dbReference>
<dbReference type="eggNOG" id="KOG0787">
    <property type="taxonomic scope" value="Eukaryota"/>
</dbReference>
<dbReference type="InParanoid" id="Q64536"/>
<dbReference type="OrthoDB" id="19815at9989"/>
<dbReference type="PhylomeDB" id="Q64536"/>
<dbReference type="BRENDA" id="2.7.11.2">
    <property type="organism ID" value="5301"/>
</dbReference>
<dbReference type="Reactome" id="R-RNO-204174">
    <property type="pathway name" value="Regulation of pyruvate dehydrogenase (PDH) complex"/>
</dbReference>
<dbReference type="Reactome" id="R-RNO-5362517">
    <property type="pathway name" value="Signaling by Retinoic Acid"/>
</dbReference>
<dbReference type="EvolutionaryTrace" id="Q64536"/>
<dbReference type="PRO" id="PR:Q64536"/>
<dbReference type="Proteomes" id="UP000002494">
    <property type="component" value="Unplaced"/>
</dbReference>
<dbReference type="GO" id="GO:0005759">
    <property type="term" value="C:mitochondrial matrix"/>
    <property type="evidence" value="ECO:0007669"/>
    <property type="project" value="UniProtKB-SubCell"/>
</dbReference>
<dbReference type="GO" id="GO:0005739">
    <property type="term" value="C:mitochondrion"/>
    <property type="evidence" value="ECO:0000266"/>
    <property type="project" value="RGD"/>
</dbReference>
<dbReference type="GO" id="GO:0045254">
    <property type="term" value="C:pyruvate dehydrogenase complex"/>
    <property type="evidence" value="ECO:0000314"/>
    <property type="project" value="RGD"/>
</dbReference>
<dbReference type="GO" id="GO:0005524">
    <property type="term" value="F:ATP binding"/>
    <property type="evidence" value="ECO:0000314"/>
    <property type="project" value="RGD"/>
</dbReference>
<dbReference type="GO" id="GO:0042802">
    <property type="term" value="F:identical protein binding"/>
    <property type="evidence" value="ECO:0000353"/>
    <property type="project" value="RGD"/>
</dbReference>
<dbReference type="GO" id="GO:0042803">
    <property type="term" value="F:protein homodimerization activity"/>
    <property type="evidence" value="ECO:0000266"/>
    <property type="project" value="RGD"/>
</dbReference>
<dbReference type="GO" id="GO:0004674">
    <property type="term" value="F:protein serine/threonine kinase activity"/>
    <property type="evidence" value="ECO:0000314"/>
    <property type="project" value="UniProtKB"/>
</dbReference>
<dbReference type="GO" id="GO:0044877">
    <property type="term" value="F:protein-containing complex binding"/>
    <property type="evidence" value="ECO:0000314"/>
    <property type="project" value="RGD"/>
</dbReference>
<dbReference type="GO" id="GO:0004740">
    <property type="term" value="F:pyruvate dehydrogenase (acetyl-transferring) kinase activity"/>
    <property type="evidence" value="ECO:0000314"/>
    <property type="project" value="UniProtKB"/>
</dbReference>
<dbReference type="GO" id="GO:0031670">
    <property type="term" value="P:cellular response to nutrient"/>
    <property type="evidence" value="ECO:0000250"/>
    <property type="project" value="UniProtKB"/>
</dbReference>
<dbReference type="GO" id="GO:0034614">
    <property type="term" value="P:cellular response to reactive oxygen species"/>
    <property type="evidence" value="ECO:0000266"/>
    <property type="project" value="RGD"/>
</dbReference>
<dbReference type="GO" id="GO:0042593">
    <property type="term" value="P:glucose homeostasis"/>
    <property type="evidence" value="ECO:0000250"/>
    <property type="project" value="UniProtKB"/>
</dbReference>
<dbReference type="GO" id="GO:0008286">
    <property type="term" value="P:insulin receptor signaling pathway"/>
    <property type="evidence" value="ECO:0000250"/>
    <property type="project" value="UniProtKB"/>
</dbReference>
<dbReference type="GO" id="GO:0072332">
    <property type="term" value="P:intrinsic apoptotic signaling pathway by p53 class mediator"/>
    <property type="evidence" value="ECO:0000266"/>
    <property type="project" value="RGD"/>
</dbReference>
<dbReference type="GO" id="GO:0018105">
    <property type="term" value="P:peptidyl-serine phosphorylation"/>
    <property type="evidence" value="ECO:0000314"/>
    <property type="project" value="UniProtKB"/>
</dbReference>
<dbReference type="GO" id="GO:0010510">
    <property type="term" value="P:regulation of acetyl-CoA biosynthetic process from pyruvate"/>
    <property type="evidence" value="ECO:0000250"/>
    <property type="project" value="UniProtKB"/>
</dbReference>
<dbReference type="GO" id="GO:0050848">
    <property type="term" value="P:regulation of calcium-mediated signaling"/>
    <property type="evidence" value="ECO:0000266"/>
    <property type="project" value="RGD"/>
</dbReference>
<dbReference type="GO" id="GO:0006111">
    <property type="term" value="P:regulation of gluconeogenesis"/>
    <property type="evidence" value="ECO:0000250"/>
    <property type="project" value="UniProtKB"/>
</dbReference>
<dbReference type="GO" id="GO:0010906">
    <property type="term" value="P:regulation of glucose metabolic process"/>
    <property type="evidence" value="ECO:0000250"/>
    <property type="project" value="UniProtKB"/>
</dbReference>
<dbReference type="GO" id="GO:0010565">
    <property type="term" value="P:regulation of ketone metabolic process"/>
    <property type="evidence" value="ECO:0000250"/>
    <property type="project" value="UniProtKB"/>
</dbReference>
<dbReference type="GO" id="GO:0006885">
    <property type="term" value="P:regulation of pH"/>
    <property type="evidence" value="ECO:0000250"/>
    <property type="project" value="UniProtKB"/>
</dbReference>
<dbReference type="CDD" id="cd16929">
    <property type="entry name" value="HATPase_PDK-like"/>
    <property type="match status" value="1"/>
</dbReference>
<dbReference type="FunFam" id="1.20.140.20:FF:000001">
    <property type="entry name" value="[Pyruvate dehydrogenase (acetyl-transferring)] kinase isozyme 2, mitochondrial"/>
    <property type="match status" value="1"/>
</dbReference>
<dbReference type="FunFam" id="3.30.565.10:FF:000007">
    <property type="entry name" value="Mitochondrial pyruvate dehydrogenase kinase isoform 2"/>
    <property type="match status" value="1"/>
</dbReference>
<dbReference type="Gene3D" id="1.20.140.20">
    <property type="entry name" value="Alpha-ketoacid/pyruvate dehydrogenase kinase, N-terminal domain"/>
    <property type="match status" value="1"/>
</dbReference>
<dbReference type="Gene3D" id="3.30.565.10">
    <property type="entry name" value="Histidine kinase-like ATPase, C-terminal domain"/>
    <property type="match status" value="1"/>
</dbReference>
<dbReference type="InterPro" id="IPR036784">
    <property type="entry name" value="AK/P_DHK_N_sf"/>
</dbReference>
<dbReference type="InterPro" id="IPR018955">
    <property type="entry name" value="BCDHK/PDK_N"/>
</dbReference>
<dbReference type="InterPro" id="IPR039028">
    <property type="entry name" value="BCKD/PDK"/>
</dbReference>
<dbReference type="InterPro" id="IPR036890">
    <property type="entry name" value="HATPase_C_sf"/>
</dbReference>
<dbReference type="InterPro" id="IPR005467">
    <property type="entry name" value="His_kinase_dom"/>
</dbReference>
<dbReference type="PANTHER" id="PTHR11947:SF15">
    <property type="entry name" value="[PYRUVATE DEHYDROGENASE (ACETYL-TRANSFERRING)] KINASE ISOZYME 2, MITOCHONDRIAL"/>
    <property type="match status" value="1"/>
</dbReference>
<dbReference type="PANTHER" id="PTHR11947">
    <property type="entry name" value="PYRUVATE DEHYDROGENASE KINASE"/>
    <property type="match status" value="1"/>
</dbReference>
<dbReference type="Pfam" id="PF10436">
    <property type="entry name" value="BCDHK_Adom3"/>
    <property type="match status" value="1"/>
</dbReference>
<dbReference type="Pfam" id="PF02518">
    <property type="entry name" value="HATPase_c"/>
    <property type="match status" value="1"/>
</dbReference>
<dbReference type="SMART" id="SM00387">
    <property type="entry name" value="HATPase_c"/>
    <property type="match status" value="1"/>
</dbReference>
<dbReference type="SUPFAM" id="SSF69012">
    <property type="entry name" value="alpha-ketoacid dehydrogenase kinase, N-terminal domain"/>
    <property type="match status" value="1"/>
</dbReference>
<dbReference type="SUPFAM" id="SSF55874">
    <property type="entry name" value="ATPase domain of HSP90 chaperone/DNA topoisomerase II/histidine kinase"/>
    <property type="match status" value="1"/>
</dbReference>
<dbReference type="PROSITE" id="PS50109">
    <property type="entry name" value="HIS_KIN"/>
    <property type="match status" value="1"/>
</dbReference>
<protein>
    <recommendedName>
        <fullName>[Pyruvate dehydrogenase (acetyl-transferring)] kinase isozyme 2, mitochondrial</fullName>
        <ecNumber>2.7.11.2</ecNumber>
    </recommendedName>
    <alternativeName>
        <fullName>PDK P45</fullName>
    </alternativeName>
    <alternativeName>
        <fullName>Pyruvate dehydrogenase kinase isoform 2</fullName>
        <shortName>PDH kinase 2</shortName>
    </alternativeName>
</protein>